<organismHost>
    <name type="scientific">Aves</name>
    <dbReference type="NCBI Taxonomy" id="8782"/>
</organismHost>
<organismHost>
    <name type="scientific">Homo sapiens</name>
    <name type="common">Human</name>
    <dbReference type="NCBI Taxonomy" id="9606"/>
</organismHost>
<organismHost>
    <name type="scientific">Sus scrofa</name>
    <name type="common">Pig</name>
    <dbReference type="NCBI Taxonomy" id="9823"/>
</organismHost>
<feature type="chain" id="PRO_0000372901" description="Matrix protein 1">
    <location>
        <begin position="1"/>
        <end position="249"/>
    </location>
</feature>
<feature type="region of interest" description="Membrane-binding" evidence="1">
    <location>
        <begin position="1"/>
        <end position="161"/>
    </location>
</feature>
<feature type="region of interest" description="RNP-binding" evidence="1">
    <location>
        <begin position="162"/>
        <end position="249"/>
    </location>
</feature>
<feature type="short sequence motif" description="Nuclear localization signal" evidence="1">
    <location>
        <begin position="98"/>
        <end position="102"/>
    </location>
</feature>
<feature type="non-terminal residue">
    <location>
        <position position="1"/>
    </location>
</feature>
<evidence type="ECO:0000250" key="1"/>
<evidence type="ECO:0000305" key="2"/>
<organism>
    <name type="scientific">Influenza A virus (strain A/USA:Texas/UR06-0195/2007 H1N1)</name>
    <dbReference type="NCBI Taxonomy" id="455880"/>
    <lineage>
        <taxon>Viruses</taxon>
        <taxon>Riboviria</taxon>
        <taxon>Orthornavirae</taxon>
        <taxon>Negarnaviricota</taxon>
        <taxon>Polyploviricotina</taxon>
        <taxon>Insthoviricetes</taxon>
        <taxon>Articulavirales</taxon>
        <taxon>Orthomyxoviridae</taxon>
        <taxon>Alphainfluenzavirus</taxon>
        <taxon>Alphainfluenzavirus influenzae</taxon>
        <taxon>Influenza A virus</taxon>
    </lineage>
</organism>
<name>M1_I07A0</name>
<sequence>LTEVETYVLSIVPSGPLKAEIAQRLEDVFAGKNTDLEALMEWLKTRPILSPLTKGILGFVFTLTVPSERGLQRRRFVQNALNGNGDPNNMDRAVKLYRKLKREITFHGAKEIALSYSAGALASCMGLIYNRMGAVTTESAFGLICATCEQIADSQHKSHRQMVTTTNPLIRHENRMVLASTTAKAMEQMAGSSEQAAEAMEVASQARQMVQAMRAIGTHPSSSTGLKNDLLENLQAYQKRMGVQMQRFK</sequence>
<gene>
    <name type="primary">M</name>
</gene>
<keyword id="KW-0025">Alternative splicing</keyword>
<keyword id="KW-1048">Host nucleus</keyword>
<keyword id="KW-0472">Membrane</keyword>
<keyword id="KW-0694">RNA-binding</keyword>
<keyword id="KW-0468">Viral matrix protein</keyword>
<keyword id="KW-0946">Virion</keyword>
<reference key="1">
    <citation type="submission" date="2007-09" db="EMBL/GenBank/DDBJ databases">
        <title>The NIAID influenza genome sequencing project.</title>
        <authorList>
            <person name="Spiro D."/>
            <person name="Sengamalay N."/>
            <person name="Boyne A."/>
            <person name="Bera J."/>
            <person name="Zaborsky J."/>
            <person name="Subbu V."/>
            <person name="Sparenborg J."/>
            <person name="Gallagher T."/>
            <person name="Overton L."/>
            <person name="Althoff R."/>
            <person name="Liu X."/>
            <person name="Ghedin E."/>
            <person name="Sitz J."/>
            <person name="Katzel D."/>
            <person name="Neupane R."/>
            <person name="Shumway M."/>
            <person name="Koo H."/>
            <person name="Edelman L."/>
            <person name="Menegus M."/>
            <person name="Mayer C."/>
            <person name="Dale S."/>
            <person name="Bao Y."/>
            <person name="Bolotov P."/>
            <person name="Dernovoy D."/>
            <person name="Kiryutin B."/>
            <person name="Lipman D.J."/>
            <person name="Tatusova T."/>
        </authorList>
    </citation>
    <scope>NUCLEOTIDE SEQUENCE [GENOMIC RNA]</scope>
</reference>
<reference key="2">
    <citation type="submission" date="2007-09" db="EMBL/GenBank/DDBJ databases">
        <authorList>
            <consortium name="The NIAID Influenza Genome Sequencing Consortium"/>
        </authorList>
    </citation>
    <scope>NUCLEOTIDE SEQUENCE [GENOMIC RNA]</scope>
</reference>
<accession>A8C8J6</accession>
<protein>
    <recommendedName>
        <fullName>Matrix protein 1</fullName>
        <shortName>M1</shortName>
    </recommendedName>
</protein>
<proteinExistence type="inferred from homology"/>
<comment type="function">
    <text evidence="1">Plays critical roles in virus replication, from virus entry and uncoating to assembly and budding of the virus particle. M1 binding to ribonucleocapsids (RNPs) in nucleus seems to inhibit viral transcription. Interaction of viral NEP with M1-RNP is thought to promote nuclear export of the complex, which is targeted to the virion assembly site at the apical plasma membrane in polarized epithelial cells. Interactions with NA and HA may bring M1, a non-raft-associated protein, into lipid rafts. Forms a continuous shell on the inner side of the lipid bilayer in virion, where it binds the RNP. During virus entry into cell, the M2 ion channel acidifies the internal virion core, inducing M1 dissociation from the RNP. M1-free RNPs are transported to the nucleus, where viral transcription and replication can take place (By similarity).</text>
</comment>
<comment type="function">
    <text evidence="1">Determines the virion's shape: spherical or filamentous. Clinical isolates of influenza are characterized by the presence of significant proportion of filamentous virions, whereas after multiple passage on eggs or cell culture, virions have only spherical morphology. Filamentous virions are thought to be important to infect neighboring cells, and spherical virions more suited to spread through aerosol between hosts organisms (By similarity).</text>
</comment>
<comment type="subunit">
    <text evidence="1">Homodimer and homomultimer. Interacts with NEP. Binds ribonucleocapsid by both interacting with genomic RNA and NP protein. May interact with HA and NA. Cannot bind NP without genomic RNA (By similarity).</text>
</comment>
<comment type="subcellular location">
    <subcellularLocation>
        <location>Virion membrane</location>
        <topology>Peripheral membrane protein</topology>
        <orientation>Cytoplasmic side</orientation>
    </subcellularLocation>
    <subcellularLocation>
        <location evidence="1">Host nucleus</location>
    </subcellularLocation>
</comment>
<comment type="alternative products">
    <event type="alternative splicing"/>
    <isoform>
        <id>A8C8J6-1</id>
        <name>M1</name>
        <sequence type="displayed"/>
    </isoform>
    <isoform>
        <id>A8C8J5-1</id>
        <name>M2</name>
        <sequence type="external"/>
    </isoform>
    <text>Only the first 9 residues are shared by the 2 isoforms.</text>
</comment>
<comment type="miscellaneous">
    <text>Most abundant protein in virion. When expressed alone can form virus-like particles in transfected cells.</text>
</comment>
<comment type="similarity">
    <text evidence="2">Belongs to the influenza viruses Matrix protein M1 family.</text>
</comment>
<dbReference type="EMBL" id="CY026212">
    <property type="protein sequence ID" value="ABV45927.1"/>
    <property type="molecule type" value="Viral_cRNA"/>
</dbReference>
<dbReference type="SMR" id="A8C8J6"/>
<dbReference type="Proteomes" id="UP001395887">
    <property type="component" value="Genome"/>
</dbReference>
<dbReference type="GO" id="GO:0042025">
    <property type="term" value="C:host cell nucleus"/>
    <property type="evidence" value="ECO:0007669"/>
    <property type="project" value="UniProtKB-SubCell"/>
</dbReference>
<dbReference type="GO" id="GO:0016020">
    <property type="term" value="C:membrane"/>
    <property type="evidence" value="ECO:0007669"/>
    <property type="project" value="UniProtKB-KW"/>
</dbReference>
<dbReference type="GO" id="GO:0055036">
    <property type="term" value="C:virion membrane"/>
    <property type="evidence" value="ECO:0007669"/>
    <property type="project" value="UniProtKB-SubCell"/>
</dbReference>
<dbReference type="GO" id="GO:0003723">
    <property type="term" value="F:RNA binding"/>
    <property type="evidence" value="ECO:0007669"/>
    <property type="project" value="UniProtKB-KW"/>
</dbReference>
<dbReference type="GO" id="GO:0039660">
    <property type="term" value="F:structural constituent of virion"/>
    <property type="evidence" value="ECO:0007669"/>
    <property type="project" value="UniProtKB-KW"/>
</dbReference>
<dbReference type="FunFam" id="1.10.10.180:FF:000001">
    <property type="entry name" value="Matrix protein 1"/>
    <property type="match status" value="1"/>
</dbReference>
<dbReference type="FunFam" id="1.20.91.10:FF:000001">
    <property type="entry name" value="Matrix protein 1"/>
    <property type="match status" value="1"/>
</dbReference>
<dbReference type="Gene3D" id="1.10.10.180">
    <property type="match status" value="1"/>
</dbReference>
<dbReference type="Gene3D" id="1.20.91.10">
    <property type="match status" value="1"/>
</dbReference>
<dbReference type="InterPro" id="IPR036039">
    <property type="entry name" value="Flu_matrix_M1"/>
</dbReference>
<dbReference type="InterPro" id="IPR013188">
    <property type="entry name" value="Flu_matrix_M1_C"/>
</dbReference>
<dbReference type="InterPro" id="IPR001561">
    <property type="entry name" value="Flu_matrix_M1_N"/>
</dbReference>
<dbReference type="InterPro" id="IPR015423">
    <property type="entry name" value="Flu_matrix_M1_N_sub1"/>
</dbReference>
<dbReference type="InterPro" id="IPR015799">
    <property type="entry name" value="Flu_matrix_M1_N_sub2"/>
</dbReference>
<dbReference type="Pfam" id="PF00598">
    <property type="entry name" value="Flu_M1"/>
    <property type="match status" value="1"/>
</dbReference>
<dbReference type="Pfam" id="PF08289">
    <property type="entry name" value="Flu_M1_C"/>
    <property type="match status" value="1"/>
</dbReference>
<dbReference type="SMART" id="SM00759">
    <property type="entry name" value="Flu_M1_C"/>
    <property type="match status" value="1"/>
</dbReference>
<dbReference type="SUPFAM" id="SSF48145">
    <property type="entry name" value="Influenza virus matrix protein M1"/>
    <property type="match status" value="1"/>
</dbReference>